<protein>
    <recommendedName>
        <fullName evidence="5">TPD1 protein homolog 1B</fullName>
    </recommendedName>
    <alternativeName>
        <fullName evidence="4">TPD1-like protein 1B</fullName>
        <shortName evidence="4">OsTDL1B</shortName>
    </alternativeName>
</protein>
<evidence type="ECO:0000250" key="1">
    <source>
        <dbReference type="UniProtKB" id="Q2QR54"/>
    </source>
</evidence>
<evidence type="ECO:0000255" key="2"/>
<evidence type="ECO:0000269" key="3">
    <source>
    </source>
</evidence>
<evidence type="ECO:0000303" key="4">
    <source>
    </source>
</evidence>
<evidence type="ECO:0000305" key="5"/>
<evidence type="ECO:0000312" key="6">
    <source>
        <dbReference type="EMBL" id="AAL82671.1"/>
    </source>
</evidence>
<evidence type="ECO:0000312" key="7">
    <source>
        <dbReference type="EMBL" id="ABB47038.2"/>
    </source>
</evidence>
<evidence type="ECO:0000312" key="8">
    <source>
        <dbReference type="EMBL" id="BAH94798.1"/>
    </source>
</evidence>
<evidence type="ECO:0000312" key="9">
    <source>
        <dbReference type="EMBL" id="EEE50724.1"/>
    </source>
</evidence>
<sequence>MADCTTMRLASSVTIILLLLVASQALVVSGESSSSAMQSKTLNMNKLLNISEDHSPNGGRHWMQRMQPDSCSEQNVVVYQNNAEHLPSGIPTYSVEIINVCTACTVYDVHISCGEFASAELVDPSQFQRIGFNDCLVKGGGRLGPSEAVSFQYSNSFAYPLAVANVACE</sequence>
<accession>Q8S6P9</accession>
<accession>A0A0P0XSX1</accession>
<accession>C7J835</accession>
<keyword id="KW-0025">Alternative splicing</keyword>
<keyword id="KW-1185">Reference proteome</keyword>
<keyword id="KW-0732">Signal</keyword>
<comment type="function">
    <text evidence="1">May play a role during anther development.</text>
</comment>
<comment type="alternative products">
    <event type="alternative splicing"/>
    <isoform>
        <id>Q8S6P9-1</id>
        <name>1</name>
        <sequence type="displayed"/>
    </isoform>
    <text evidence="5">A number of isoforms are produced. According to EST sequences.</text>
</comment>
<comment type="tissue specificity">
    <text evidence="3">Expressed in roots, and at low levels in anthers during meiosis.</text>
</comment>
<comment type="sequence caution" evidence="5">
    <conflict type="erroneous gene model prediction">
        <sequence resource="EMBL-CDS" id="BAH94798"/>
    </conflict>
</comment>
<proteinExistence type="evidence at transcript level"/>
<feature type="signal peptide" evidence="2">
    <location>
        <begin position="1"/>
        <end position="25"/>
    </location>
</feature>
<feature type="chain" id="PRO_0000432096" description="TPD1 protein homolog 1B" evidence="2">
    <location>
        <begin position="26"/>
        <end position="169"/>
    </location>
</feature>
<gene>
    <name evidence="4" type="primary">TDL1B</name>
    <name evidence="8" type="ordered locus">Os10g0207500</name>
    <name evidence="7" type="ordered locus">LOC_Os10g14020</name>
    <name evidence="6" type="ORF">OJ1004_F02.2</name>
    <name evidence="9" type="ORF">OsJ_31024</name>
</gene>
<dbReference type="EMBL" id="AC092387">
    <property type="protein sequence ID" value="AAL82671.1"/>
    <property type="molecule type" value="Genomic_DNA"/>
</dbReference>
<dbReference type="EMBL" id="DP000086">
    <property type="protein sequence ID" value="ABB47038.2"/>
    <property type="molecule type" value="Genomic_DNA"/>
</dbReference>
<dbReference type="EMBL" id="AP008216">
    <property type="protein sequence ID" value="BAH94798.1"/>
    <property type="status" value="ALT_SEQ"/>
    <property type="molecule type" value="Genomic_DNA"/>
</dbReference>
<dbReference type="EMBL" id="AP014966">
    <property type="protein sequence ID" value="BAT10263.1"/>
    <property type="molecule type" value="Genomic_DNA"/>
</dbReference>
<dbReference type="EMBL" id="CM000147">
    <property type="protein sequence ID" value="EEE50724.1"/>
    <property type="molecule type" value="Genomic_DNA"/>
</dbReference>
<dbReference type="EMBL" id="AK121594">
    <property type="protein sequence ID" value="BAH00567.1"/>
    <property type="molecule type" value="mRNA"/>
</dbReference>
<dbReference type="RefSeq" id="XP_015612959.1">
    <property type="nucleotide sequence ID" value="XM_015757473.1"/>
</dbReference>
<dbReference type="FunCoup" id="Q8S6P9">
    <property type="interactions" value="3"/>
</dbReference>
<dbReference type="STRING" id="39947.Q8S6P9"/>
<dbReference type="PaxDb" id="39947-Q8S6P9"/>
<dbReference type="EnsemblPlants" id="Os10t0207500-01">
    <molecule id="Q8S6P9-1"/>
    <property type="protein sequence ID" value="Os10t0207500-01"/>
    <property type="gene ID" value="Os10g0207500"/>
</dbReference>
<dbReference type="Gramene" id="Os10t0207500-01">
    <molecule id="Q8S6P9-1"/>
    <property type="protein sequence ID" value="Os10t0207500-01"/>
    <property type="gene ID" value="Os10g0207500"/>
</dbReference>
<dbReference type="KEGG" id="dosa:Os10g0207500"/>
<dbReference type="eggNOG" id="ENOG502S0K4">
    <property type="taxonomic scope" value="Eukaryota"/>
</dbReference>
<dbReference type="HOGENOM" id="CLU_102808_0_1_1"/>
<dbReference type="InParanoid" id="Q8S6P9"/>
<dbReference type="OMA" id="HYSTERM"/>
<dbReference type="OrthoDB" id="1572689at2759"/>
<dbReference type="Proteomes" id="UP000000763">
    <property type="component" value="Chromosome 10"/>
</dbReference>
<dbReference type="Proteomes" id="UP000007752">
    <property type="component" value="Chromosome 10"/>
</dbReference>
<dbReference type="Proteomes" id="UP000059680">
    <property type="component" value="Chromosome 10"/>
</dbReference>
<dbReference type="GO" id="GO:0001709">
    <property type="term" value="P:cell fate determination"/>
    <property type="evidence" value="ECO:0000318"/>
    <property type="project" value="GO_Central"/>
</dbReference>
<dbReference type="InterPro" id="IPR040361">
    <property type="entry name" value="TPD1"/>
</dbReference>
<dbReference type="PANTHER" id="PTHR33184">
    <property type="entry name" value="PROTEIN TAPETUM DETERMINANT 1-LIKE-RELATED"/>
    <property type="match status" value="1"/>
</dbReference>
<dbReference type="PANTHER" id="PTHR33184:SF75">
    <property type="entry name" value="TPD1 PROTEIN HOMOLOG 1B"/>
    <property type="match status" value="1"/>
</dbReference>
<dbReference type="Pfam" id="PF24068">
    <property type="entry name" value="TPD1_C"/>
    <property type="match status" value="1"/>
</dbReference>
<organism>
    <name type="scientific">Oryza sativa subsp. japonica</name>
    <name type="common">Rice</name>
    <dbReference type="NCBI Taxonomy" id="39947"/>
    <lineage>
        <taxon>Eukaryota</taxon>
        <taxon>Viridiplantae</taxon>
        <taxon>Streptophyta</taxon>
        <taxon>Embryophyta</taxon>
        <taxon>Tracheophyta</taxon>
        <taxon>Spermatophyta</taxon>
        <taxon>Magnoliopsida</taxon>
        <taxon>Liliopsida</taxon>
        <taxon>Poales</taxon>
        <taxon>Poaceae</taxon>
        <taxon>BOP clade</taxon>
        <taxon>Oryzoideae</taxon>
        <taxon>Oryzeae</taxon>
        <taxon>Oryzinae</taxon>
        <taxon>Oryza</taxon>
        <taxon>Oryza sativa</taxon>
    </lineage>
</organism>
<reference key="1">
    <citation type="journal article" date="2003" name="Science">
        <title>In-depth view of structure, activity, and evolution of rice chromosome 10.</title>
        <authorList>
            <person name="Yu Y."/>
            <person name="Rambo T."/>
            <person name="Currie J."/>
            <person name="Saski C."/>
            <person name="Kim H.-R."/>
            <person name="Collura K."/>
            <person name="Thompson S."/>
            <person name="Simmons J."/>
            <person name="Yang T.-J."/>
            <person name="Nah G."/>
            <person name="Patel A.J."/>
            <person name="Thurmond S."/>
            <person name="Henry D."/>
            <person name="Oates R."/>
            <person name="Palmer M."/>
            <person name="Pries G."/>
            <person name="Gibson J."/>
            <person name="Anderson H."/>
            <person name="Paradkar M."/>
            <person name="Crane L."/>
            <person name="Dale J."/>
            <person name="Carver M.B."/>
            <person name="Wood T."/>
            <person name="Frisch D."/>
            <person name="Engler F."/>
            <person name="Soderlund C."/>
            <person name="Palmer L.E."/>
            <person name="Teytelman L."/>
            <person name="Nascimento L."/>
            <person name="De la Bastide M."/>
            <person name="Spiegel L."/>
            <person name="Ware D."/>
            <person name="O'Shaughnessy A."/>
            <person name="Dike S."/>
            <person name="Dedhia N."/>
            <person name="Preston R."/>
            <person name="Huang E."/>
            <person name="Ferraro K."/>
            <person name="Kuit K."/>
            <person name="Miller B."/>
            <person name="Zutavern T."/>
            <person name="Katzenberger F."/>
            <person name="Muller S."/>
            <person name="Balija V."/>
            <person name="Martienssen R.A."/>
            <person name="Stein L."/>
            <person name="Minx P."/>
            <person name="Johnson D."/>
            <person name="Cordum H."/>
            <person name="Mardis E."/>
            <person name="Cheng Z."/>
            <person name="Jiang J."/>
            <person name="Wilson R."/>
            <person name="McCombie W.R."/>
            <person name="Wing R.A."/>
            <person name="Yuan Q."/>
            <person name="Ouyang S."/>
            <person name="Liu J."/>
            <person name="Jones K.M."/>
            <person name="Gansberger K."/>
            <person name="Moffat K."/>
            <person name="Hill J."/>
            <person name="Tsitrin T."/>
            <person name="Overton L."/>
            <person name="Bera J."/>
            <person name="Kim M."/>
            <person name="Jin S."/>
            <person name="Tallon L."/>
            <person name="Ciecko A."/>
            <person name="Pai G."/>
            <person name="Van Aken S."/>
            <person name="Utterback T."/>
            <person name="Reidmuller S."/>
            <person name="Bormann J."/>
            <person name="Feldblyum T."/>
            <person name="Hsiao J."/>
            <person name="Zismann V."/>
            <person name="Blunt S."/>
            <person name="de Vazeille A.R."/>
            <person name="Shaffer T."/>
            <person name="Koo H."/>
            <person name="Suh B."/>
            <person name="Yang Q."/>
            <person name="Haas B."/>
            <person name="Peterson J."/>
            <person name="Pertea M."/>
            <person name="Volfovsky N."/>
            <person name="Wortman J."/>
            <person name="White O."/>
            <person name="Salzberg S.L."/>
            <person name="Fraser C.M."/>
            <person name="Buell C.R."/>
            <person name="Messing J."/>
            <person name="Song R."/>
            <person name="Fuks G."/>
            <person name="Llaca V."/>
            <person name="Kovchak S."/>
            <person name="Young S."/>
            <person name="Bowers J.E."/>
            <person name="Paterson A.H."/>
            <person name="Johns M.A."/>
            <person name="Mao L."/>
            <person name="Pan H."/>
            <person name="Dean R.A."/>
        </authorList>
    </citation>
    <scope>NUCLEOTIDE SEQUENCE [LARGE SCALE GENOMIC DNA]</scope>
    <source>
        <strain>cv. Nipponbare</strain>
    </source>
</reference>
<reference key="2">
    <citation type="journal article" date="2005" name="Nature">
        <title>The map-based sequence of the rice genome.</title>
        <authorList>
            <consortium name="International rice genome sequencing project (IRGSP)"/>
        </authorList>
    </citation>
    <scope>NUCLEOTIDE SEQUENCE [LARGE SCALE GENOMIC DNA]</scope>
    <source>
        <strain>cv. Nipponbare</strain>
    </source>
</reference>
<reference key="3">
    <citation type="journal article" date="2008" name="Nucleic Acids Res.">
        <title>The rice annotation project database (RAP-DB): 2008 update.</title>
        <authorList>
            <consortium name="The rice annotation project (RAP)"/>
        </authorList>
    </citation>
    <scope>GENOME REANNOTATION</scope>
    <source>
        <strain>cv. Nipponbare</strain>
    </source>
</reference>
<reference key="4">
    <citation type="journal article" date="2013" name="Rice">
        <title>Improvement of the Oryza sativa Nipponbare reference genome using next generation sequence and optical map data.</title>
        <authorList>
            <person name="Kawahara Y."/>
            <person name="de la Bastide M."/>
            <person name="Hamilton J.P."/>
            <person name="Kanamori H."/>
            <person name="McCombie W.R."/>
            <person name="Ouyang S."/>
            <person name="Schwartz D.C."/>
            <person name="Tanaka T."/>
            <person name="Wu J."/>
            <person name="Zhou S."/>
            <person name="Childs K.L."/>
            <person name="Davidson R.M."/>
            <person name="Lin H."/>
            <person name="Quesada-Ocampo L."/>
            <person name="Vaillancourt B."/>
            <person name="Sakai H."/>
            <person name="Lee S.S."/>
            <person name="Kim J."/>
            <person name="Numa H."/>
            <person name="Itoh T."/>
            <person name="Buell C.R."/>
            <person name="Matsumoto T."/>
        </authorList>
    </citation>
    <scope>GENOME REANNOTATION</scope>
    <source>
        <strain>cv. Nipponbare</strain>
    </source>
</reference>
<reference key="5">
    <citation type="journal article" date="2005" name="PLoS Biol.">
        <title>The genomes of Oryza sativa: a history of duplications.</title>
        <authorList>
            <person name="Yu J."/>
            <person name="Wang J."/>
            <person name="Lin W."/>
            <person name="Li S."/>
            <person name="Li H."/>
            <person name="Zhou J."/>
            <person name="Ni P."/>
            <person name="Dong W."/>
            <person name="Hu S."/>
            <person name="Zeng C."/>
            <person name="Zhang J."/>
            <person name="Zhang Y."/>
            <person name="Li R."/>
            <person name="Xu Z."/>
            <person name="Li S."/>
            <person name="Li X."/>
            <person name="Zheng H."/>
            <person name="Cong L."/>
            <person name="Lin L."/>
            <person name="Yin J."/>
            <person name="Geng J."/>
            <person name="Li G."/>
            <person name="Shi J."/>
            <person name="Liu J."/>
            <person name="Lv H."/>
            <person name="Li J."/>
            <person name="Wang J."/>
            <person name="Deng Y."/>
            <person name="Ran L."/>
            <person name="Shi X."/>
            <person name="Wang X."/>
            <person name="Wu Q."/>
            <person name="Li C."/>
            <person name="Ren X."/>
            <person name="Wang J."/>
            <person name="Wang X."/>
            <person name="Li D."/>
            <person name="Liu D."/>
            <person name="Zhang X."/>
            <person name="Ji Z."/>
            <person name="Zhao W."/>
            <person name="Sun Y."/>
            <person name="Zhang Z."/>
            <person name="Bao J."/>
            <person name="Han Y."/>
            <person name="Dong L."/>
            <person name="Ji J."/>
            <person name="Chen P."/>
            <person name="Wu S."/>
            <person name="Liu J."/>
            <person name="Xiao Y."/>
            <person name="Bu D."/>
            <person name="Tan J."/>
            <person name="Yang L."/>
            <person name="Ye C."/>
            <person name="Zhang J."/>
            <person name="Xu J."/>
            <person name="Zhou Y."/>
            <person name="Yu Y."/>
            <person name="Zhang B."/>
            <person name="Zhuang S."/>
            <person name="Wei H."/>
            <person name="Liu B."/>
            <person name="Lei M."/>
            <person name="Yu H."/>
            <person name="Li Y."/>
            <person name="Xu H."/>
            <person name="Wei S."/>
            <person name="He X."/>
            <person name="Fang L."/>
            <person name="Zhang Z."/>
            <person name="Zhang Y."/>
            <person name="Huang X."/>
            <person name="Su Z."/>
            <person name="Tong W."/>
            <person name="Li J."/>
            <person name="Tong Z."/>
            <person name="Li S."/>
            <person name="Ye J."/>
            <person name="Wang L."/>
            <person name="Fang L."/>
            <person name="Lei T."/>
            <person name="Chen C.-S."/>
            <person name="Chen H.-C."/>
            <person name="Xu Z."/>
            <person name="Li H."/>
            <person name="Huang H."/>
            <person name="Zhang F."/>
            <person name="Xu H."/>
            <person name="Li N."/>
            <person name="Zhao C."/>
            <person name="Li S."/>
            <person name="Dong L."/>
            <person name="Huang Y."/>
            <person name="Li L."/>
            <person name="Xi Y."/>
            <person name="Qi Q."/>
            <person name="Li W."/>
            <person name="Zhang B."/>
            <person name="Hu W."/>
            <person name="Zhang Y."/>
            <person name="Tian X."/>
            <person name="Jiao Y."/>
            <person name="Liang X."/>
            <person name="Jin J."/>
            <person name="Gao L."/>
            <person name="Zheng W."/>
            <person name="Hao B."/>
            <person name="Liu S.-M."/>
            <person name="Wang W."/>
            <person name="Yuan L."/>
            <person name="Cao M."/>
            <person name="McDermott J."/>
            <person name="Samudrala R."/>
            <person name="Wang J."/>
            <person name="Wong G.K.-S."/>
            <person name="Yang H."/>
        </authorList>
    </citation>
    <scope>NUCLEOTIDE SEQUENCE [LARGE SCALE GENOMIC DNA]</scope>
    <source>
        <strain>cv. Nipponbare</strain>
    </source>
</reference>
<reference key="6">
    <citation type="journal article" date="2003" name="Science">
        <title>Collection, mapping, and annotation of over 28,000 cDNA clones from japonica rice.</title>
        <authorList>
            <consortium name="The rice full-length cDNA consortium"/>
        </authorList>
    </citation>
    <scope>NUCLEOTIDE SEQUENCE [LARGE SCALE MRNA]</scope>
    <source>
        <strain>cv. Nipponbare</strain>
    </source>
</reference>
<reference key="7">
    <citation type="journal article" date="2008" name="Plant J.">
        <title>OsTDL1A binds to the LRR domain of rice receptor kinase MSP1, and is required to limit sporocyte numbers.</title>
        <authorList>
            <person name="Zhao X."/>
            <person name="de Palma J."/>
            <person name="Oane R."/>
            <person name="Gamuyao R."/>
            <person name="Luo M."/>
            <person name="Chaudhury A."/>
            <person name="Herve P."/>
            <person name="Xue Q."/>
            <person name="Bennett J."/>
        </authorList>
    </citation>
    <scope>TISSUE SPECIFICITY</scope>
</reference>
<name>TDL1B_ORYSJ</name>